<keyword id="KW-0003">3Fe-4S</keyword>
<keyword id="KW-0025">Alternative splicing</keyword>
<keyword id="KW-0028">Amino-acid biosynthesis</keyword>
<keyword id="KW-0150">Chloroplast</keyword>
<keyword id="KW-0274">FAD</keyword>
<keyword id="KW-0285">Flavoprotein</keyword>
<keyword id="KW-0288">FMN</keyword>
<keyword id="KW-0314">Glutamate biosynthesis</keyword>
<keyword id="KW-0315">Glutamine amidotransferase</keyword>
<keyword id="KW-0408">Iron</keyword>
<keyword id="KW-0411">Iron-sulfur</keyword>
<keyword id="KW-0479">Metal-binding</keyword>
<keyword id="KW-0496">Mitochondrion</keyword>
<keyword id="KW-0560">Oxidoreductase</keyword>
<keyword id="KW-0934">Plastid</keyword>
<keyword id="KW-1185">Reference proteome</keyword>
<keyword id="KW-0809">Transit peptide</keyword>
<name>GLTB1_ARATH</name>
<gene>
    <name evidence="12" type="primary">GLU1</name>
    <name evidence="12" type="synonym">GLS1</name>
    <name evidence="14" type="ordered locus">At5g04140</name>
    <name evidence="15" type="ORF">F21E1_60</name>
</gene>
<protein>
    <recommendedName>
        <fullName evidence="13">Ferredoxin-dependent glutamate synthase 1, chloroplastic/mitochondrial</fullName>
        <ecNumber evidence="6">1.4.7.1</ecNumber>
    </recommendedName>
    <alternativeName>
        <fullName evidence="12">Fd-GOGAT 1</fullName>
    </alternativeName>
</protein>
<proteinExistence type="evidence at protein level"/>
<evidence type="ECO:0000250" key="1"/>
<evidence type="ECO:0000250" key="2">
    <source>
        <dbReference type="UniProtKB" id="P09831"/>
    </source>
</evidence>
<evidence type="ECO:0000250" key="3">
    <source>
        <dbReference type="UniProtKB" id="Q43155"/>
    </source>
</evidence>
<evidence type="ECO:0000255" key="4"/>
<evidence type="ECO:0000255" key="5">
    <source>
        <dbReference type="PROSITE-ProRule" id="PRU00609"/>
    </source>
</evidence>
<evidence type="ECO:0000269" key="6">
    <source>
    </source>
</evidence>
<evidence type="ECO:0000269" key="7">
    <source>
    </source>
</evidence>
<evidence type="ECO:0000269" key="8">
    <source>
    </source>
</evidence>
<evidence type="ECO:0000269" key="9">
    <source>
    </source>
</evidence>
<evidence type="ECO:0000269" key="10">
    <source>
    </source>
</evidence>
<evidence type="ECO:0000303" key="11">
    <source>
    </source>
</evidence>
<evidence type="ECO:0000303" key="12">
    <source>
    </source>
</evidence>
<evidence type="ECO:0000305" key="13"/>
<evidence type="ECO:0000312" key="14">
    <source>
        <dbReference type="Araport" id="AT5G04140"/>
    </source>
</evidence>
<evidence type="ECO:0000312" key="15">
    <source>
        <dbReference type="EMBL" id="CAC05496.1"/>
    </source>
</evidence>
<organism>
    <name type="scientific">Arabidopsis thaliana</name>
    <name type="common">Mouse-ear cress</name>
    <dbReference type="NCBI Taxonomy" id="3702"/>
    <lineage>
        <taxon>Eukaryota</taxon>
        <taxon>Viridiplantae</taxon>
        <taxon>Streptophyta</taxon>
        <taxon>Embryophyta</taxon>
        <taxon>Tracheophyta</taxon>
        <taxon>Spermatophyta</taxon>
        <taxon>Magnoliopsida</taxon>
        <taxon>eudicotyledons</taxon>
        <taxon>Gunneridae</taxon>
        <taxon>Pentapetalae</taxon>
        <taxon>rosids</taxon>
        <taxon>malvids</taxon>
        <taxon>Brassicales</taxon>
        <taxon>Brassicaceae</taxon>
        <taxon>Camelineae</taxon>
        <taxon>Arabidopsis</taxon>
    </lineage>
</organism>
<reference key="1">
    <citation type="journal article" date="1997" name="Eur. J. Biochem.">
        <title>Structure and regulation of ferredoxin-dependent glutamase synthase from Arabidopsis thaliana. Cloning of cDNA expression in different tissues of wild-type and gltS mutant strains, and light induction.</title>
        <authorList>
            <person name="Suzuki A."/>
            <person name="Rothstein S."/>
        </authorList>
    </citation>
    <scope>NUCLEOTIDE SEQUENCE [MRNA] (ISOFORM 2)</scope>
    <source>
        <strain>cv. Columbia</strain>
    </source>
</reference>
<reference key="2">
    <citation type="journal article" date="1998" name="Plant Cell">
        <title>Arabidopsis gls mutants and distinct Fd-GOGAT genes. Implications for photorespiration and primary nitrogen assimilation.</title>
        <authorList>
            <person name="Coschigano K.T."/>
            <person name="Melo-Oliveira R."/>
            <person name="Lim J."/>
            <person name="Coruzzi G.M."/>
        </authorList>
    </citation>
    <scope>NUCLEOTIDE SEQUENCE [MRNA] (ISOFORM 1)</scope>
    <scope>FUNCTION</scope>
    <scope>TISSUE SPECIFICITY</scope>
    <scope>INDUCTION BY LIGHT AND SUGAR</scope>
    <source>
        <strain>cv. Columbia</strain>
    </source>
</reference>
<reference key="3">
    <citation type="journal article" date="2000" name="Nature">
        <title>Sequence and analysis of chromosome 5 of the plant Arabidopsis thaliana.</title>
        <authorList>
            <person name="Tabata S."/>
            <person name="Kaneko T."/>
            <person name="Nakamura Y."/>
            <person name="Kotani H."/>
            <person name="Kato T."/>
            <person name="Asamizu E."/>
            <person name="Miyajima N."/>
            <person name="Sasamoto S."/>
            <person name="Kimura T."/>
            <person name="Hosouchi T."/>
            <person name="Kawashima K."/>
            <person name="Kohara M."/>
            <person name="Matsumoto M."/>
            <person name="Matsuno A."/>
            <person name="Muraki A."/>
            <person name="Nakayama S."/>
            <person name="Nakazaki N."/>
            <person name="Naruo K."/>
            <person name="Okumura S."/>
            <person name="Shinpo S."/>
            <person name="Takeuchi C."/>
            <person name="Wada T."/>
            <person name="Watanabe A."/>
            <person name="Yamada M."/>
            <person name="Yasuda M."/>
            <person name="Sato S."/>
            <person name="de la Bastide M."/>
            <person name="Huang E."/>
            <person name="Spiegel L."/>
            <person name="Gnoj L."/>
            <person name="O'Shaughnessy A."/>
            <person name="Preston R."/>
            <person name="Habermann K."/>
            <person name="Murray J."/>
            <person name="Johnson D."/>
            <person name="Rohlfing T."/>
            <person name="Nelson J."/>
            <person name="Stoneking T."/>
            <person name="Pepin K."/>
            <person name="Spieth J."/>
            <person name="Sekhon M."/>
            <person name="Armstrong J."/>
            <person name="Becker M."/>
            <person name="Belter E."/>
            <person name="Cordum H."/>
            <person name="Cordes M."/>
            <person name="Courtney L."/>
            <person name="Courtney W."/>
            <person name="Dante M."/>
            <person name="Du H."/>
            <person name="Edwards J."/>
            <person name="Fryman J."/>
            <person name="Haakensen B."/>
            <person name="Lamar E."/>
            <person name="Latreille P."/>
            <person name="Leonard S."/>
            <person name="Meyer R."/>
            <person name="Mulvaney E."/>
            <person name="Ozersky P."/>
            <person name="Riley A."/>
            <person name="Strowmatt C."/>
            <person name="Wagner-McPherson C."/>
            <person name="Wollam A."/>
            <person name="Yoakum M."/>
            <person name="Bell M."/>
            <person name="Dedhia N."/>
            <person name="Parnell L."/>
            <person name="Shah R."/>
            <person name="Rodriguez M."/>
            <person name="Hoon See L."/>
            <person name="Vil D."/>
            <person name="Baker J."/>
            <person name="Kirchoff K."/>
            <person name="Toth K."/>
            <person name="King L."/>
            <person name="Bahret A."/>
            <person name="Miller B."/>
            <person name="Marra M.A."/>
            <person name="Martienssen R."/>
            <person name="McCombie W.R."/>
            <person name="Wilson R.K."/>
            <person name="Murphy G."/>
            <person name="Bancroft I."/>
            <person name="Volckaert G."/>
            <person name="Wambutt R."/>
            <person name="Duesterhoeft A."/>
            <person name="Stiekema W."/>
            <person name="Pohl T."/>
            <person name="Entian K.-D."/>
            <person name="Terryn N."/>
            <person name="Hartley N."/>
            <person name="Bent E."/>
            <person name="Johnson S."/>
            <person name="Langham S.-A."/>
            <person name="McCullagh B."/>
            <person name="Robben J."/>
            <person name="Grymonprez B."/>
            <person name="Zimmermann W."/>
            <person name="Ramsperger U."/>
            <person name="Wedler H."/>
            <person name="Balke K."/>
            <person name="Wedler E."/>
            <person name="Peters S."/>
            <person name="van Staveren M."/>
            <person name="Dirkse W."/>
            <person name="Mooijman P."/>
            <person name="Klein Lankhorst R."/>
            <person name="Weitzenegger T."/>
            <person name="Bothe G."/>
            <person name="Rose M."/>
            <person name="Hauf J."/>
            <person name="Berneiser S."/>
            <person name="Hempel S."/>
            <person name="Feldpausch M."/>
            <person name="Lamberth S."/>
            <person name="Villarroel R."/>
            <person name="Gielen J."/>
            <person name="Ardiles W."/>
            <person name="Bents O."/>
            <person name="Lemcke K."/>
            <person name="Kolesov G."/>
            <person name="Mayer K.F.X."/>
            <person name="Rudd S."/>
            <person name="Schoof H."/>
            <person name="Schueller C."/>
            <person name="Zaccaria P."/>
            <person name="Mewes H.-W."/>
            <person name="Bevan M."/>
            <person name="Fransz P.F."/>
        </authorList>
    </citation>
    <scope>NUCLEOTIDE SEQUENCE [LARGE SCALE GENOMIC DNA]</scope>
    <source>
        <strain>cv. Columbia</strain>
    </source>
</reference>
<reference key="4">
    <citation type="journal article" date="2017" name="Plant J.">
        <title>Araport11: a complete reannotation of the Arabidopsis thaliana reference genome.</title>
        <authorList>
            <person name="Cheng C.Y."/>
            <person name="Krishnakumar V."/>
            <person name="Chan A.P."/>
            <person name="Thibaud-Nissen F."/>
            <person name="Schobel S."/>
            <person name="Town C.D."/>
        </authorList>
    </citation>
    <scope>GENOME REANNOTATION</scope>
    <source>
        <strain>cv. Columbia</strain>
    </source>
</reference>
<reference key="5">
    <citation type="journal article" date="2009" name="FEBS J.">
        <title>Assimilation of excess ammonium into amino acids and nitrogen translocation in Arabidopsis thaliana--roles of glutamate synthases and carbamoylphosphate synthetase in leaves.</title>
        <authorList>
            <person name="Potel F."/>
            <person name="Valadier M.H."/>
            <person name="Ferrario-Mery S."/>
            <person name="Grandjean O."/>
            <person name="Morin H."/>
            <person name="Gaufichon L."/>
            <person name="Boutet-Mercey S."/>
            <person name="Lothier J."/>
            <person name="Rothstein S.J."/>
            <person name="Hirose N."/>
            <person name="Suzuki A."/>
        </authorList>
    </citation>
    <scope>TISSUE SPECIFICITY</scope>
    <scope>SUBCELLULAR LOCATION</scope>
    <scope>FUNCTION</scope>
</reference>
<reference key="6">
    <citation type="journal article" date="2009" name="J. Proteomics">
        <title>Phosphoproteomic analysis of nuclei-enriched fractions from Arabidopsis thaliana.</title>
        <authorList>
            <person name="Jones A.M.E."/>
            <person name="MacLean D."/>
            <person name="Studholme D.J."/>
            <person name="Serna-Sanz A."/>
            <person name="Andreasson E."/>
            <person name="Rathjen J.P."/>
            <person name="Peck S.C."/>
        </authorList>
    </citation>
    <scope>IDENTIFICATION BY MASS SPECTROMETRY [LARGE SCALE ANALYSIS]</scope>
    <source>
        <strain>cv. Columbia</strain>
    </source>
</reference>
<reference key="7">
    <citation type="journal article" date="2009" name="Plant Cell">
        <title>Arabidopsis photorespiratory serine hydroxymethyltransferase activity requires the mitochondrial accumulation of ferredoxin-dependent glutamate synthase.</title>
        <authorList>
            <person name="Jamai A."/>
            <person name="Salome P.A."/>
            <person name="Schilling S.H."/>
            <person name="Weber A.P."/>
            <person name="McClung C.R."/>
        </authorList>
    </citation>
    <scope>INTERACTION WITH SHM1</scope>
    <scope>SUBCELLULAR LOCATION</scope>
    <scope>DUAL TARGETING</scope>
    <scope>FUNCTION</scope>
    <scope>CATALYTIC ACTIVITY</scope>
    <scope>MUTAGENESIS OF LEU-1270</scope>
    <scope>DISRUPTION PHENOTYPE</scope>
</reference>
<reference key="8">
    <citation type="journal article" date="2010" name="Amino Acids">
        <title>Analysis of glutamate homeostasis by overexpression of Fd-GOGAT gene in Arabidopsis thaliana.</title>
        <authorList>
            <person name="Ishizaki T."/>
            <person name="Ohsumi C."/>
            <person name="Totsuka K."/>
            <person name="Igarashi D."/>
        </authorList>
    </citation>
    <scope>FUNCTION</scope>
</reference>
<reference key="9">
    <citation type="journal article" date="2011" name="PLoS ONE">
        <title>GNC and CGA1 modulate chlorophyll biosynthesis and glutamate synthase (GLU1/Fd-GOGAT) expression in Arabidopsis.</title>
        <authorList>
            <person name="Hudson D."/>
            <person name="Guevara D."/>
            <person name="Yaish M.W."/>
            <person name="Hannam C."/>
            <person name="Long N."/>
            <person name="Clarke J.D."/>
            <person name="Bi Y.-M."/>
            <person name="Rothstein S.J."/>
        </authorList>
    </citation>
    <scope>INDUCTION BY GATA21/GNC AND GATA22/CGA1</scope>
</reference>
<accession>Q9ZNZ7</accession>
<accession>P93649</accession>
<feature type="transit peptide" description="Chloroplast and mitochondrion" evidence="4">
    <location>
        <begin position="1"/>
        <end position="105"/>
    </location>
</feature>
<feature type="chain" id="PRO_0000011614" description="Ferredoxin-dependent glutamate synthase 1, chloroplastic/mitochondrial">
    <location>
        <begin position="106"/>
        <end position="1622"/>
    </location>
</feature>
<feature type="domain" description="Glutamine amidotransferase type-2" evidence="5">
    <location>
        <begin position="106"/>
        <end position="505"/>
    </location>
</feature>
<feature type="active site" description="For GATase activity" evidence="1">
    <location>
        <position position="106"/>
    </location>
</feature>
<feature type="binding site" evidence="1">
    <location>
        <begin position="1184"/>
        <end position="1241"/>
    </location>
    <ligand>
        <name>FMN</name>
        <dbReference type="ChEBI" id="CHEBI:58210"/>
    </ligand>
</feature>
<feature type="binding site" evidence="1">
    <location>
        <position position="1237"/>
    </location>
    <ligand>
        <name>[3Fe-4S] cluster</name>
        <dbReference type="ChEBI" id="CHEBI:21137"/>
    </ligand>
</feature>
<feature type="binding site" evidence="1">
    <location>
        <position position="1243"/>
    </location>
    <ligand>
        <name>[3Fe-4S] cluster</name>
        <dbReference type="ChEBI" id="CHEBI:21137"/>
    </ligand>
</feature>
<feature type="binding site" evidence="1">
    <location>
        <position position="1248"/>
    </location>
    <ligand>
        <name>[3Fe-4S] cluster</name>
        <dbReference type="ChEBI" id="CHEBI:21137"/>
    </ligand>
</feature>
<feature type="splice variant" id="VSP_046513" description="In isoform 2." evidence="11">
    <original>Q</original>
    <variation>QVRFFTDINFTNTQRAKFHPLWGSFKQ</variation>
    <location>
        <position position="92"/>
    </location>
</feature>
<feature type="mutagenesis site" description="In glu1-201; Abolishes interaction with SHM1. Displays photorespiratory chlorosis when grown at ambient CO2." evidence="6">
    <original>L</original>
    <variation>F</variation>
    <location>
        <position position="1270"/>
    </location>
</feature>
<feature type="sequence conflict" description="In Ref. 2; AAC78551." evidence="13" ref="2">
    <original>L</original>
    <variation>W</variation>
    <location>
        <position position="96"/>
    </location>
</feature>
<feature type="sequence conflict" description="In Ref. 2; AAC78551." evidence="13" ref="2">
    <original>G</original>
    <variation>R</variation>
    <location>
        <position position="211"/>
    </location>
</feature>
<feature type="sequence conflict" description="In Ref. 1; CAA70862." evidence="13" ref="1">
    <original>S</original>
    <variation>C</variation>
    <location>
        <position position="385"/>
    </location>
</feature>
<feature type="sequence conflict" description="In Ref. 1; CAA70862." evidence="13" ref="1">
    <original>EGLV</original>
    <variation>KVWF</variation>
    <location>
        <begin position="621"/>
        <end position="624"/>
    </location>
</feature>
<feature type="sequence conflict" description="In Ref. 1; CAA70862." evidence="13" ref="1">
    <original>A</original>
    <variation>T</variation>
    <location>
        <position position="734"/>
    </location>
</feature>
<feature type="sequence conflict" description="In Ref. 1; CAA70862." evidence="13" ref="1">
    <original>IF</original>
    <variation>DI</variation>
    <location>
        <begin position="1473"/>
        <end position="1474"/>
    </location>
</feature>
<feature type="sequence conflict" description="In Ref. 2; AAC78551." evidence="13" ref="2">
    <original>E</original>
    <variation>K</variation>
    <location>
        <position position="1585"/>
    </location>
</feature>
<dbReference type="EC" id="1.4.7.1" evidence="6"/>
<dbReference type="EMBL" id="Y09667">
    <property type="protein sequence ID" value="CAA70862.1"/>
    <property type="molecule type" value="mRNA"/>
</dbReference>
<dbReference type="EMBL" id="U39287">
    <property type="protein sequence ID" value="AAC78551.1"/>
    <property type="molecule type" value="mRNA"/>
</dbReference>
<dbReference type="EMBL" id="AL391716">
    <property type="protein sequence ID" value="CAC05496.1"/>
    <property type="molecule type" value="Genomic_DNA"/>
</dbReference>
<dbReference type="EMBL" id="CP002688">
    <property type="protein sequence ID" value="AED90703.1"/>
    <property type="molecule type" value="Genomic_DNA"/>
</dbReference>
<dbReference type="EMBL" id="CP002688">
    <property type="protein sequence ID" value="AED90704.1"/>
    <property type="molecule type" value="Genomic_DNA"/>
</dbReference>
<dbReference type="RefSeq" id="NP_568134.1">
    <molecule id="Q9ZNZ7-1"/>
    <property type="nucleotide sequence ID" value="NM_120496.3"/>
</dbReference>
<dbReference type="RefSeq" id="NP_850763.1">
    <molecule id="Q9ZNZ7-2"/>
    <property type="nucleotide sequence ID" value="NM_180432.2"/>
</dbReference>
<dbReference type="SMR" id="Q9ZNZ7"/>
<dbReference type="BioGRID" id="15572">
    <property type="interactions" value="14"/>
</dbReference>
<dbReference type="FunCoup" id="Q9ZNZ7">
    <property type="interactions" value="912"/>
</dbReference>
<dbReference type="IntAct" id="Q9ZNZ7">
    <property type="interactions" value="2"/>
</dbReference>
<dbReference type="STRING" id="3702.Q9ZNZ7"/>
<dbReference type="MEROPS" id="C44.951"/>
<dbReference type="GlyGen" id="Q9ZNZ7">
    <property type="glycosylation" value="1 site"/>
</dbReference>
<dbReference type="iPTMnet" id="Q9ZNZ7"/>
<dbReference type="MetOSite" id="Q9ZNZ7"/>
<dbReference type="PaxDb" id="3702-AT5G04140.2"/>
<dbReference type="ProteomicsDB" id="248543">
    <molecule id="Q9ZNZ7-1"/>
</dbReference>
<dbReference type="EnsemblPlants" id="AT5G04140.1">
    <molecule id="Q9ZNZ7-1"/>
    <property type="protein sequence ID" value="AT5G04140.1"/>
    <property type="gene ID" value="AT5G04140"/>
</dbReference>
<dbReference type="EnsemblPlants" id="AT5G04140.2">
    <molecule id="Q9ZNZ7-2"/>
    <property type="protein sequence ID" value="AT5G04140.2"/>
    <property type="gene ID" value="AT5G04140"/>
</dbReference>
<dbReference type="GeneID" id="830292"/>
<dbReference type="Gramene" id="AT5G04140.1">
    <molecule id="Q9ZNZ7-1"/>
    <property type="protein sequence ID" value="AT5G04140.1"/>
    <property type="gene ID" value="AT5G04140"/>
</dbReference>
<dbReference type="Gramene" id="AT5G04140.2">
    <molecule id="Q9ZNZ7-2"/>
    <property type="protein sequence ID" value="AT5G04140.2"/>
    <property type="gene ID" value="AT5G04140"/>
</dbReference>
<dbReference type="KEGG" id="ath:AT5G04140"/>
<dbReference type="Araport" id="AT5G04140"/>
<dbReference type="TAIR" id="AT5G04140">
    <property type="gene designation" value="GLU1"/>
</dbReference>
<dbReference type="eggNOG" id="KOG0399">
    <property type="taxonomic scope" value="Eukaryota"/>
</dbReference>
<dbReference type="HOGENOM" id="CLU_000422_8_2_1"/>
<dbReference type="InParanoid" id="Q9ZNZ7"/>
<dbReference type="OMA" id="LKTGWDV"/>
<dbReference type="BioCyc" id="ARA:AT5G04140-MONOMER"/>
<dbReference type="BRENDA" id="1.4.7.1">
    <property type="organism ID" value="399"/>
</dbReference>
<dbReference type="UniPathway" id="UPA00045"/>
<dbReference type="UniPathway" id="UPA00634">
    <property type="reaction ID" value="UER00691"/>
</dbReference>
<dbReference type="PRO" id="PR:Q9ZNZ7"/>
<dbReference type="Proteomes" id="UP000006548">
    <property type="component" value="Chromosome 5"/>
</dbReference>
<dbReference type="ExpressionAtlas" id="Q9ZNZ7">
    <property type="expression patterns" value="baseline and differential"/>
</dbReference>
<dbReference type="GO" id="GO:0048046">
    <property type="term" value="C:apoplast"/>
    <property type="evidence" value="ECO:0007005"/>
    <property type="project" value="TAIR"/>
</dbReference>
<dbReference type="GO" id="GO:0009507">
    <property type="term" value="C:chloroplast"/>
    <property type="evidence" value="ECO:0000314"/>
    <property type="project" value="TAIR"/>
</dbReference>
<dbReference type="GO" id="GO:0009941">
    <property type="term" value="C:chloroplast envelope"/>
    <property type="evidence" value="ECO:0007005"/>
    <property type="project" value="TAIR"/>
</dbReference>
<dbReference type="GO" id="GO:0009570">
    <property type="term" value="C:chloroplast stroma"/>
    <property type="evidence" value="ECO:0007005"/>
    <property type="project" value="TAIR"/>
</dbReference>
<dbReference type="GO" id="GO:0005759">
    <property type="term" value="C:mitochondrial matrix"/>
    <property type="evidence" value="ECO:0007669"/>
    <property type="project" value="UniProtKB-SubCell"/>
</dbReference>
<dbReference type="GO" id="GO:0005739">
    <property type="term" value="C:mitochondrion"/>
    <property type="evidence" value="ECO:0000314"/>
    <property type="project" value="TAIR"/>
</dbReference>
<dbReference type="GO" id="GO:0005886">
    <property type="term" value="C:plasma membrane"/>
    <property type="evidence" value="ECO:0007005"/>
    <property type="project" value="TAIR"/>
</dbReference>
<dbReference type="GO" id="GO:0051538">
    <property type="term" value="F:3 iron, 4 sulfur cluster binding"/>
    <property type="evidence" value="ECO:0007669"/>
    <property type="project" value="UniProtKB-KW"/>
</dbReference>
<dbReference type="GO" id="GO:0016041">
    <property type="term" value="F:glutamate synthase (ferredoxin) activity"/>
    <property type="evidence" value="ECO:0000314"/>
    <property type="project" value="TAIR"/>
</dbReference>
<dbReference type="GO" id="GO:0046872">
    <property type="term" value="F:metal ion binding"/>
    <property type="evidence" value="ECO:0007669"/>
    <property type="project" value="UniProtKB-KW"/>
</dbReference>
<dbReference type="GO" id="GO:0003729">
    <property type="term" value="F:mRNA binding"/>
    <property type="evidence" value="ECO:0000314"/>
    <property type="project" value="TAIR"/>
</dbReference>
<dbReference type="GO" id="GO:0097054">
    <property type="term" value="P:L-glutamate biosynthetic process"/>
    <property type="evidence" value="ECO:0007669"/>
    <property type="project" value="UniProtKB-UniPathway"/>
</dbReference>
<dbReference type="GO" id="GO:0009853">
    <property type="term" value="P:photorespiration"/>
    <property type="evidence" value="ECO:0000315"/>
    <property type="project" value="TAIR"/>
</dbReference>
<dbReference type="GO" id="GO:0009416">
    <property type="term" value="P:response to light stimulus"/>
    <property type="evidence" value="ECO:0000270"/>
    <property type="project" value="UniProtKB"/>
</dbReference>
<dbReference type="GO" id="GO:0009744">
    <property type="term" value="P:response to sucrose"/>
    <property type="evidence" value="ECO:0000270"/>
    <property type="project" value="UniProtKB"/>
</dbReference>
<dbReference type="CDD" id="cd00982">
    <property type="entry name" value="gltB_C"/>
    <property type="match status" value="1"/>
</dbReference>
<dbReference type="CDD" id="cd00713">
    <property type="entry name" value="GltS"/>
    <property type="match status" value="1"/>
</dbReference>
<dbReference type="CDD" id="cd02808">
    <property type="entry name" value="GltS_FMN"/>
    <property type="match status" value="1"/>
</dbReference>
<dbReference type="FunFam" id="2.160.20.60:FF:000003">
    <property type="entry name" value="Ferredoxin-dependent glutamate synthase, chloroplastic"/>
    <property type="match status" value="1"/>
</dbReference>
<dbReference type="FunFam" id="3.20.20.70:FF:000084">
    <property type="entry name" value="Ferredoxin-dependent glutamate synthase, chloroplastic"/>
    <property type="match status" value="1"/>
</dbReference>
<dbReference type="FunFam" id="3.20.20.70:FF:000127">
    <property type="entry name" value="Ferredoxin-dependent glutamate synthase, chloroplastic"/>
    <property type="match status" value="1"/>
</dbReference>
<dbReference type="FunFam" id="3.60.20.10:FF:000001">
    <property type="entry name" value="Glutamate synthase, large subunit"/>
    <property type="match status" value="1"/>
</dbReference>
<dbReference type="Gene3D" id="3.20.20.70">
    <property type="entry name" value="Aldolase class I"/>
    <property type="match status" value="2"/>
</dbReference>
<dbReference type="Gene3D" id="2.160.20.60">
    <property type="entry name" value="Glutamate synthase, alpha subunit, C-terminal domain"/>
    <property type="match status" value="1"/>
</dbReference>
<dbReference type="Gene3D" id="3.60.20.10">
    <property type="entry name" value="Glutamine Phosphoribosylpyrophosphate, subunit 1, domain 1"/>
    <property type="match status" value="1"/>
</dbReference>
<dbReference type="InterPro" id="IPR013785">
    <property type="entry name" value="Aldolase_TIM"/>
</dbReference>
<dbReference type="InterPro" id="IPR050711">
    <property type="entry name" value="ET-N_metabolism_enzyme"/>
</dbReference>
<dbReference type="InterPro" id="IPR017932">
    <property type="entry name" value="GATase_2_dom"/>
</dbReference>
<dbReference type="InterPro" id="IPR002489">
    <property type="entry name" value="Glu_synth_asu_C"/>
</dbReference>
<dbReference type="InterPro" id="IPR036485">
    <property type="entry name" value="Glu_synth_asu_C_sf"/>
</dbReference>
<dbReference type="InterPro" id="IPR006982">
    <property type="entry name" value="Glu_synth_centr_N"/>
</dbReference>
<dbReference type="InterPro" id="IPR002932">
    <property type="entry name" value="Glu_synthdom"/>
</dbReference>
<dbReference type="InterPro" id="IPR029055">
    <property type="entry name" value="Ntn_hydrolases_N"/>
</dbReference>
<dbReference type="NCBIfam" id="NF008730">
    <property type="entry name" value="PRK11750.1"/>
    <property type="match status" value="1"/>
</dbReference>
<dbReference type="PANTHER" id="PTHR11938">
    <property type="entry name" value="FAD NADPH DEHYDROGENASE/OXIDOREDUCTASE"/>
    <property type="match status" value="1"/>
</dbReference>
<dbReference type="PANTHER" id="PTHR11938:SF133">
    <property type="entry name" value="GLUTAMATE SYNTHASE (NADH)"/>
    <property type="match status" value="1"/>
</dbReference>
<dbReference type="Pfam" id="PF00310">
    <property type="entry name" value="GATase_2"/>
    <property type="match status" value="1"/>
</dbReference>
<dbReference type="Pfam" id="PF04898">
    <property type="entry name" value="Glu_syn_central"/>
    <property type="match status" value="1"/>
</dbReference>
<dbReference type="Pfam" id="PF01645">
    <property type="entry name" value="Glu_synthase"/>
    <property type="match status" value="1"/>
</dbReference>
<dbReference type="Pfam" id="PF01493">
    <property type="entry name" value="GXGXG"/>
    <property type="match status" value="1"/>
</dbReference>
<dbReference type="SUPFAM" id="SSF69336">
    <property type="entry name" value="Alpha subunit of glutamate synthase, C-terminal domain"/>
    <property type="match status" value="1"/>
</dbReference>
<dbReference type="SUPFAM" id="SSF51395">
    <property type="entry name" value="FMN-linked oxidoreductases"/>
    <property type="match status" value="1"/>
</dbReference>
<dbReference type="SUPFAM" id="SSF56235">
    <property type="entry name" value="N-terminal nucleophile aminohydrolases (Ntn hydrolases)"/>
    <property type="match status" value="1"/>
</dbReference>
<dbReference type="PROSITE" id="PS51278">
    <property type="entry name" value="GATASE_TYPE_2"/>
    <property type="match status" value="1"/>
</dbReference>
<sequence length="1622" mass="176752">MAMQSLSPVPKLLSTTPSSVLSSDKNFFFVDFVGLYCKSKRTRRRLRGDSSSSSRSSSSLSRLSSVRAVIDLERVHGVSEKDLSSPSALRPQVANLEDILSERGACGVGFIANLDNIPSHGVVKDALIALGCMEHRGGCGADNDSGDGSGLMSSIPWDFFNVWAKEQSLAPFDKLHTGVGMIFLPQDDTFMQEAKQVIENIFEKEGLQVLGWREVPVNVPIVGKNARETMPNIQQVFVKIAKEDSTDDIERELYICRKLIERAVATESWGTELYFCSLSNQTIVYKGMLRSEALGLFYLDLQNELYESPFAIYHRRYSTNTSPRWPLAQPMRFLGHNGEINTIQGNLNWMQSREASLKAAVWNGRENEIRPFGNPRGSDSANLDSAAEIMIRSGRTPEEALMILVPEAYKNHPTLSVKYPEVVDFYDYYKGQMEAWDGPALLLFSDGKTVGACLDRNGLRPARYWRTSDNFVYVASEVGVVPVDEAKVTMKGRLGPGMMIAVDLVNGQVYENTEVKKRISSFNPYGKWIKENSRFLKPVNFKSSTVMENEEILRSQQAFGYSSEDVQMVIESMASQGKEPTFCMGDDIPLAGLSQRPHMLYDYFKQRFAQVTNPAIDPLREGLVMSLEVNIGKRGNILELGPENASQVILSNPVLNEGALEELMKDQYLKPKVLSTYFDIRKGVEGSLQKALYYLCEAADDAVRSGSQLLVLSDRSDRLEPTRPSIPIMLAVGAVHQHLIQNGLRMSASIVADTAQCFSTHHFACLVGYGASAVCPYLALETCRQWRLSNKTVAFMRNGKIPTVTIEQAQKNYTKAVNAGLLKILSKMGISLLSSYCGAQIFEIYGLGQDVVDLAFTGSVSKISGLTFDELARETLSFWVKAFSEDTTKRLENFGFIQFRPGGEYHSNNPEMSKLLHKAVREKSETAYAVYQQHLSNRPVNVLRDLLEFKSDRAPIPVGKVEPAVAIVQRFCTGGMSLGAISRETHEAIAIAMNRIGGKSNSGEGGEDPIRWKPLTDVVDGYSPTLPHLKGLQNGDIATSAIKQVASGRFGVTPTFLVNADQLEIKVAQGAKPGEGGQLPGKKVSAYIARLRSSKPGVPLISPPPHHDIYSIEDLAQLIFDLHQINPNAKVSVKLVAEAGIGTVASGVAKGNADIIQISGHDGGTGASPISSIKHAGGPWELGLTETHQTLIANGLRERVILRVDGGLKSGVDVLMAAAMGADEYGFGSLAMIATGCVMARICHTNNCPVGVASQREELRARFPGVPGDLVNYFLYVAEEVRGILAQLGYNSLDDIIGRTELLRPRDISLVKTQHLDLSYLLSSVGTPSLSSTEIRKQEVHTNGPVLDDDILADPLVIDAIENEKVVEKTVKICNVDRAACGRVAGVIAKKYGDTGFAGQVNLTFLGSAGQSFGCFLIPGMNIRLIGESNDYVGKGMAGGEIVVTPVEKIGFVPEEATIVGNTCLYGATGGQIFARGKAGERFAVRNSLAEAVVEGTGDHCCEYMTGGCVVVLGKVGRNVAAGMTGGLAYLLDEDDTLLPKINREIVKIQRVTAPAGELQLKSLIEAHVEKTGSSKGATILNEWEKYLPLFWQLVPPSEEDTPEASAAYVRTSTGEVTFQSA</sequence>
<comment type="function">
    <text evidence="6 7 8 10">Involved in glutamate biosynthesis in leaf. Required for the reassimilation of ammonium ions generated during photorespiration.</text>
</comment>
<comment type="catalytic activity">
    <reaction evidence="6">
        <text>2 oxidized [2Fe-2S]-[ferredoxin] + 2 L-glutamate = L-glutamine + 2 reduced [2Fe-2S]-[ferredoxin] + 2-oxoglutarate + 2 H(+)</text>
        <dbReference type="Rhea" id="RHEA:12128"/>
        <dbReference type="Rhea" id="RHEA-COMP:10000"/>
        <dbReference type="Rhea" id="RHEA-COMP:10001"/>
        <dbReference type="ChEBI" id="CHEBI:15378"/>
        <dbReference type="ChEBI" id="CHEBI:16810"/>
        <dbReference type="ChEBI" id="CHEBI:29985"/>
        <dbReference type="ChEBI" id="CHEBI:33737"/>
        <dbReference type="ChEBI" id="CHEBI:33738"/>
        <dbReference type="ChEBI" id="CHEBI:58359"/>
        <dbReference type="EC" id="1.4.7.1"/>
    </reaction>
    <physiologicalReaction direction="right-to-left" evidence="6">
        <dbReference type="Rhea" id="RHEA:12130"/>
    </physiologicalReaction>
</comment>
<comment type="cofactor">
    <cofactor evidence="3">
        <name>[3Fe-4S] cluster</name>
        <dbReference type="ChEBI" id="CHEBI:21137"/>
    </cofactor>
    <text evidence="3">Binds 1 [3Fe-4S] cluster.</text>
</comment>
<comment type="cofactor">
    <cofactor evidence="2">
        <name>FAD</name>
        <dbReference type="ChEBI" id="CHEBI:57692"/>
    </cofactor>
</comment>
<comment type="cofactor">
    <cofactor evidence="3">
        <name>FMN</name>
        <dbReference type="ChEBI" id="CHEBI:58210"/>
    </cofactor>
</comment>
<comment type="pathway">
    <text evidence="13">Amino-acid biosynthesis; L-glutamate biosynthesis via GLT pathway; L-glutamate from 2-oxoglutarate and L-glutamine (ferredoxin route): step 1/1.</text>
</comment>
<comment type="pathway">
    <text evidence="13">Energy metabolism; nitrogen metabolism.</text>
</comment>
<comment type="subunit">
    <text evidence="6">Interacts with SHM1.</text>
</comment>
<comment type="interaction">
    <interactant intactId="EBI-2292564">
        <id>Q9ZNZ7</id>
    </interactant>
    <interactant intactId="EBI-2292536">
        <id>Q9SZJ5</id>
        <label>SHM1</label>
    </interactant>
    <organismsDiffer>false</organismsDiffer>
    <experiments>2</experiments>
</comment>
<comment type="subcellular location">
    <subcellularLocation>
        <location evidence="6">Plastid</location>
        <location evidence="6">Chloroplast stroma</location>
    </subcellularLocation>
    <subcellularLocation>
        <location evidence="6">Mitochondrion matrix</location>
    </subcellularLocation>
    <text evidence="6">Dual targeting is supposed to depend on alternative initiation: Met-1 or Met-3 for chloroplast or mitochondrion location, respectively.</text>
</comment>
<comment type="alternative products">
    <event type="alternative splicing"/>
    <isoform>
        <id>Q9ZNZ7-1</id>
        <name>1</name>
        <name>Short</name>
        <sequence type="displayed"/>
    </isoform>
    <isoform>
        <id>Q9ZNZ7-2</id>
        <name>2</name>
        <name>Long</name>
        <sequence type="described" ref="VSP_046513"/>
    </isoform>
</comment>
<comment type="tissue specificity">
    <text evidence="8 10">Highly expressed in leaves. High expression in the leaf mesophyll and phloem companion cell-sieve element complex.</text>
</comment>
<comment type="induction">
    <text evidence="9 10">Up-regulated by GATA21/GNC and GATA22/CGA1. Induced by light or sucrose.</text>
</comment>
<comment type="disruption phenotype">
    <text evidence="6">Displays photorespiratory chlorosis when grown at ambient CO2.</text>
</comment>
<comment type="miscellaneous">
    <molecule>Isoform 2</molecule>
    <text evidence="13">May be due to an intron retention.</text>
</comment>
<comment type="similarity">
    <text evidence="13">Belongs to the glutamate synthase family.</text>
</comment>